<keyword id="KW-1185">Reference proteome</keyword>
<keyword id="KW-0808">Transferase</keyword>
<name>Y0571_MYCTU</name>
<proteinExistence type="evidence at protein level"/>
<accession>P9WHK1</accession>
<accession>L0T5R8</accession>
<accession>O53768</accession>
<accession>Q7D9M2</accession>
<evidence type="ECO:0000269" key="1">
    <source>
    </source>
</evidence>
<evidence type="ECO:0000269" key="2">
    <source>
    </source>
</evidence>
<evidence type="ECO:0000305" key="3"/>
<comment type="induction">
    <text evidence="1 2">A member of the dormancy regulon. Induced in response to reduced oxygen tension (hypoxia), low levels of nitric oxide (NO) and carbon monoxide (CO). It is hoped that this regulon will give insight into the latent, or dormant phase of infection.</text>
</comment>
<comment type="similarity">
    <text evidence="3">In the N-terminal section; belongs to the purine/pyrimidine phosphoribosyltransferase family.</text>
</comment>
<comment type="similarity">
    <text evidence="3">In the C-terminal section; belongs to the dienelactone hydrolase family.</text>
</comment>
<reference key="1">
    <citation type="journal article" date="1998" name="Nature">
        <title>Deciphering the biology of Mycobacterium tuberculosis from the complete genome sequence.</title>
        <authorList>
            <person name="Cole S.T."/>
            <person name="Brosch R."/>
            <person name="Parkhill J."/>
            <person name="Garnier T."/>
            <person name="Churcher C.M."/>
            <person name="Harris D.E."/>
            <person name="Gordon S.V."/>
            <person name="Eiglmeier K."/>
            <person name="Gas S."/>
            <person name="Barry C.E. III"/>
            <person name="Tekaia F."/>
            <person name="Badcock K."/>
            <person name="Basham D."/>
            <person name="Brown D."/>
            <person name="Chillingworth T."/>
            <person name="Connor R."/>
            <person name="Davies R.M."/>
            <person name="Devlin K."/>
            <person name="Feltwell T."/>
            <person name="Gentles S."/>
            <person name="Hamlin N."/>
            <person name="Holroyd S."/>
            <person name="Hornsby T."/>
            <person name="Jagels K."/>
            <person name="Krogh A."/>
            <person name="McLean J."/>
            <person name="Moule S."/>
            <person name="Murphy L.D."/>
            <person name="Oliver S."/>
            <person name="Osborne J."/>
            <person name="Quail M.A."/>
            <person name="Rajandream M.A."/>
            <person name="Rogers J."/>
            <person name="Rutter S."/>
            <person name="Seeger K."/>
            <person name="Skelton S."/>
            <person name="Squares S."/>
            <person name="Squares R."/>
            <person name="Sulston J.E."/>
            <person name="Taylor K."/>
            <person name="Whitehead S."/>
            <person name="Barrell B.G."/>
        </authorList>
    </citation>
    <scope>NUCLEOTIDE SEQUENCE [LARGE SCALE GENOMIC DNA]</scope>
    <source>
        <strain>ATCC 25618 / H37Rv</strain>
    </source>
</reference>
<reference key="2">
    <citation type="journal article" date="2003" name="J. Exp. Med.">
        <title>Inhibition of respiration by nitric oxide induces a Mycobacterium tuberculosis dormancy program.</title>
        <authorList>
            <person name="Voskuil M.I."/>
            <person name="Schnappinger D."/>
            <person name="Visconti K.C."/>
            <person name="Harrell M.I."/>
            <person name="Dolganov G.M."/>
            <person name="Sherman D.R."/>
            <person name="Schoolnik G.K."/>
        </authorList>
    </citation>
    <scope>INDUCTION BY NITRIC OXIDE (NO) AND BY HYPOXIA</scope>
    <scope>DORMANCY REGULON</scope>
    <source>
        <strain>ATCC 25618 / H37Rv</strain>
    </source>
</reference>
<reference key="3">
    <citation type="journal article" date="2008" name="J. Biol. Chem.">
        <title>Heme oxygenase-1-derived carbon monoxide induces the Mycobacterium tuberculosis dormancy regulon.</title>
        <authorList>
            <person name="Kumar A."/>
            <person name="Deshane J.S."/>
            <person name="Crossman D.K."/>
            <person name="Bolisetty S."/>
            <person name="Yan B.S."/>
            <person name="Kramnik I."/>
            <person name="Agarwal A."/>
            <person name="Steyn A.J."/>
        </authorList>
    </citation>
    <scope>INDUCTION BY CARBON MONOXIDE (CO)</scope>
    <scope>DORMANCY REGULON</scope>
    <source>
        <strain>ATCC 25618 / H37Rv</strain>
    </source>
</reference>
<reference key="4">
    <citation type="journal article" date="2011" name="Mol. Cell. Proteomics">
        <title>Proteogenomic analysis of Mycobacterium tuberculosis by high resolution mass spectrometry.</title>
        <authorList>
            <person name="Kelkar D.S."/>
            <person name="Kumar D."/>
            <person name="Kumar P."/>
            <person name="Balakrishnan L."/>
            <person name="Muthusamy B."/>
            <person name="Yadav A.K."/>
            <person name="Shrivastava P."/>
            <person name="Marimuthu A."/>
            <person name="Anand S."/>
            <person name="Sundaram H."/>
            <person name="Kingsbury R."/>
            <person name="Harsha H.C."/>
            <person name="Nair B."/>
            <person name="Prasad T.S."/>
            <person name="Chauhan D.S."/>
            <person name="Katoch K."/>
            <person name="Katoch V.M."/>
            <person name="Kumar P."/>
            <person name="Chaerkady R."/>
            <person name="Ramachandran S."/>
            <person name="Dash D."/>
            <person name="Pandey A."/>
        </authorList>
    </citation>
    <scope>IDENTIFICATION BY MASS SPECTROMETRY [LARGE SCALE ANALYSIS]</scope>
    <source>
        <strain>ATCC 25618 / H37Rv</strain>
    </source>
</reference>
<organism>
    <name type="scientific">Mycobacterium tuberculosis (strain ATCC 25618 / H37Rv)</name>
    <dbReference type="NCBI Taxonomy" id="83332"/>
    <lineage>
        <taxon>Bacteria</taxon>
        <taxon>Bacillati</taxon>
        <taxon>Actinomycetota</taxon>
        <taxon>Actinomycetes</taxon>
        <taxon>Mycobacteriales</taxon>
        <taxon>Mycobacteriaceae</taxon>
        <taxon>Mycobacterium</taxon>
        <taxon>Mycobacterium tuberculosis complex</taxon>
    </lineage>
</organism>
<sequence>MKLFDDRGDAGRQLAQRLAQLSGKAVVVLGLPRGGVPVAFEVAKSLQAPLDVLVVRKLGVPFQPELAFGAIGEDGVRVLNDDVVRGTHLDAAAMDAVERKQLIELQRRAERFRRGRDRIPLTGRIAVIVDDGIATGATAKAACQVARAHGADKVVLAVPIGPDDIVARFAGYADEVVCLATPALFFAVGQGYRNFTQTSDDEVVAFLDRAHRDFAEAGAIDAAADPPLRDEEVQVVAGPVPVAGHLTVPEKPRGIVVFAHGSGSSRHSIRNRYVAEVLTGAGFATLLFDLLTPEEERNRANVFDIELLASRLIDVTGWLATQPDTASLPVGYFGASTGAGAALVAAADPRVNVRAVVSRGGRPDLAGDSLGSVVAPTLLIVGGRDQVVLELNQRAQAVIPGKCQLTVVPGATHLFEEPGTLEQVAKLACDWFIDHLCGPGPSG</sequence>
<dbReference type="EMBL" id="AL123456">
    <property type="protein sequence ID" value="CCP43309.1"/>
    <property type="molecule type" value="Genomic_DNA"/>
</dbReference>
<dbReference type="PIR" id="B70933">
    <property type="entry name" value="B70933"/>
</dbReference>
<dbReference type="RefSeq" id="NP_215085.1">
    <property type="nucleotide sequence ID" value="NC_000962.3"/>
</dbReference>
<dbReference type="RefSeq" id="WP_003403001.1">
    <property type="nucleotide sequence ID" value="NZ_NVQJ01000036.1"/>
</dbReference>
<dbReference type="SMR" id="P9WHK1"/>
<dbReference type="STRING" id="83332.Rv0571c"/>
<dbReference type="ESTHER" id="myctu-y0571">
    <property type="family name" value="DLH-S"/>
</dbReference>
<dbReference type="PaxDb" id="83332-Rv0571c"/>
<dbReference type="DNASU" id="887710"/>
<dbReference type="GeneID" id="887710"/>
<dbReference type="KEGG" id="mtu:Rv0571c"/>
<dbReference type="KEGG" id="mtv:RVBD_0571c"/>
<dbReference type="TubercuList" id="Rv0571c"/>
<dbReference type="eggNOG" id="COG1073">
    <property type="taxonomic scope" value="Bacteria"/>
</dbReference>
<dbReference type="eggNOG" id="COG1926">
    <property type="taxonomic scope" value="Bacteria"/>
</dbReference>
<dbReference type="InParanoid" id="P9WHK1"/>
<dbReference type="OrthoDB" id="9810066at2"/>
<dbReference type="Proteomes" id="UP000001584">
    <property type="component" value="Chromosome"/>
</dbReference>
<dbReference type="GO" id="GO:0005829">
    <property type="term" value="C:cytosol"/>
    <property type="evidence" value="ECO:0007005"/>
    <property type="project" value="MTBBASE"/>
</dbReference>
<dbReference type="GO" id="GO:0009274">
    <property type="term" value="C:peptidoglycan-based cell wall"/>
    <property type="evidence" value="ECO:0007005"/>
    <property type="project" value="MTBBASE"/>
</dbReference>
<dbReference type="GO" id="GO:0016787">
    <property type="term" value="F:hydrolase activity"/>
    <property type="evidence" value="ECO:0007669"/>
    <property type="project" value="InterPro"/>
</dbReference>
<dbReference type="GO" id="GO:0016740">
    <property type="term" value="F:transferase activity"/>
    <property type="evidence" value="ECO:0007669"/>
    <property type="project" value="UniProtKB-KW"/>
</dbReference>
<dbReference type="CDD" id="cd06223">
    <property type="entry name" value="PRTases_typeI"/>
    <property type="match status" value="1"/>
</dbReference>
<dbReference type="Gene3D" id="3.40.50.2020">
    <property type="match status" value="1"/>
</dbReference>
<dbReference type="Gene3D" id="3.40.50.1820">
    <property type="entry name" value="alpha/beta hydrolase"/>
    <property type="match status" value="1"/>
</dbReference>
<dbReference type="Gene3D" id="3.30.1310.20">
    <property type="entry name" value="PRTase-like"/>
    <property type="match status" value="1"/>
</dbReference>
<dbReference type="InterPro" id="IPR029058">
    <property type="entry name" value="AB_hydrolase_fold"/>
</dbReference>
<dbReference type="InterPro" id="IPR002925">
    <property type="entry name" value="Dienelactn_hydro"/>
</dbReference>
<dbReference type="InterPro" id="IPR052036">
    <property type="entry name" value="Hydrolase/PRTase-associated"/>
</dbReference>
<dbReference type="InterPro" id="IPR000836">
    <property type="entry name" value="PRibTrfase_dom"/>
</dbReference>
<dbReference type="InterPro" id="IPR029057">
    <property type="entry name" value="PRTase-like"/>
</dbReference>
<dbReference type="PANTHER" id="PTHR31299">
    <property type="entry name" value="ESTERASE, PUTATIVE (AFU_ORTHOLOGUE AFUA_1G05850)-RELATED"/>
    <property type="match status" value="1"/>
</dbReference>
<dbReference type="PANTHER" id="PTHR31299:SF0">
    <property type="entry name" value="ESTERASE, PUTATIVE (AFU_ORTHOLOGUE AFUA_1G05850)-RELATED"/>
    <property type="match status" value="1"/>
</dbReference>
<dbReference type="Pfam" id="PF01738">
    <property type="entry name" value="DLH"/>
    <property type="match status" value="1"/>
</dbReference>
<dbReference type="Pfam" id="PF00156">
    <property type="entry name" value="Pribosyltran"/>
    <property type="match status" value="1"/>
</dbReference>
<dbReference type="SUPFAM" id="SSF53474">
    <property type="entry name" value="alpha/beta-Hydrolases"/>
    <property type="match status" value="1"/>
</dbReference>
<dbReference type="SUPFAM" id="SSF53271">
    <property type="entry name" value="PRTase-like"/>
    <property type="match status" value="1"/>
</dbReference>
<protein>
    <recommendedName>
        <fullName>Putative phosphoribosyl transferase Rv0571c</fullName>
    </recommendedName>
</protein>
<gene>
    <name type="ordered locus">Rv0571c</name>
</gene>
<feature type="chain" id="PRO_0000392688" description="Putative phosphoribosyl transferase Rv0571c">
    <location>
        <begin position="1"/>
        <end position="443"/>
    </location>
</feature>